<protein>
    <recommendedName>
        <fullName evidence="1">Acyl carrier protein</fullName>
        <shortName evidence="1">ACP</shortName>
    </recommendedName>
</protein>
<dbReference type="EMBL" id="CP000720">
    <property type="protein sequence ID" value="ABS49862.1"/>
    <property type="molecule type" value="Genomic_DNA"/>
</dbReference>
<dbReference type="RefSeq" id="WP_002220787.1">
    <property type="nucleotide sequence ID" value="NC_009708.1"/>
</dbReference>
<dbReference type="SMR" id="A7FH28"/>
<dbReference type="GeneID" id="97455792"/>
<dbReference type="KEGG" id="ypi:YpsIP31758_1579"/>
<dbReference type="HOGENOM" id="CLU_108696_5_1_6"/>
<dbReference type="UniPathway" id="UPA00094"/>
<dbReference type="Proteomes" id="UP000002412">
    <property type="component" value="Chromosome"/>
</dbReference>
<dbReference type="GO" id="GO:0005829">
    <property type="term" value="C:cytosol"/>
    <property type="evidence" value="ECO:0007669"/>
    <property type="project" value="TreeGrafter"/>
</dbReference>
<dbReference type="GO" id="GO:0016020">
    <property type="term" value="C:membrane"/>
    <property type="evidence" value="ECO:0007669"/>
    <property type="project" value="GOC"/>
</dbReference>
<dbReference type="GO" id="GO:0000035">
    <property type="term" value="F:acyl binding"/>
    <property type="evidence" value="ECO:0007669"/>
    <property type="project" value="TreeGrafter"/>
</dbReference>
<dbReference type="GO" id="GO:0000036">
    <property type="term" value="F:acyl carrier activity"/>
    <property type="evidence" value="ECO:0007669"/>
    <property type="project" value="UniProtKB-UniRule"/>
</dbReference>
<dbReference type="GO" id="GO:0009245">
    <property type="term" value="P:lipid A biosynthetic process"/>
    <property type="evidence" value="ECO:0007669"/>
    <property type="project" value="TreeGrafter"/>
</dbReference>
<dbReference type="FunFam" id="1.10.1200.10:FF:000001">
    <property type="entry name" value="Acyl carrier protein"/>
    <property type="match status" value="1"/>
</dbReference>
<dbReference type="Gene3D" id="1.10.1200.10">
    <property type="entry name" value="ACP-like"/>
    <property type="match status" value="1"/>
</dbReference>
<dbReference type="HAMAP" id="MF_01217">
    <property type="entry name" value="Acyl_carrier"/>
    <property type="match status" value="1"/>
</dbReference>
<dbReference type="InterPro" id="IPR003231">
    <property type="entry name" value="ACP"/>
</dbReference>
<dbReference type="InterPro" id="IPR036736">
    <property type="entry name" value="ACP-like_sf"/>
</dbReference>
<dbReference type="InterPro" id="IPR009081">
    <property type="entry name" value="PP-bd_ACP"/>
</dbReference>
<dbReference type="InterPro" id="IPR006162">
    <property type="entry name" value="Ppantetheine_attach_site"/>
</dbReference>
<dbReference type="NCBIfam" id="TIGR00517">
    <property type="entry name" value="acyl_carrier"/>
    <property type="match status" value="1"/>
</dbReference>
<dbReference type="NCBIfam" id="NF002148">
    <property type="entry name" value="PRK00982.1-2"/>
    <property type="match status" value="1"/>
</dbReference>
<dbReference type="NCBIfam" id="NF002149">
    <property type="entry name" value="PRK00982.1-3"/>
    <property type="match status" value="1"/>
</dbReference>
<dbReference type="NCBIfam" id="NF002150">
    <property type="entry name" value="PRK00982.1-4"/>
    <property type="match status" value="1"/>
</dbReference>
<dbReference type="NCBIfam" id="NF002151">
    <property type="entry name" value="PRK00982.1-5"/>
    <property type="match status" value="1"/>
</dbReference>
<dbReference type="PANTHER" id="PTHR20863">
    <property type="entry name" value="ACYL CARRIER PROTEIN"/>
    <property type="match status" value="1"/>
</dbReference>
<dbReference type="PANTHER" id="PTHR20863:SF76">
    <property type="entry name" value="CARRIER DOMAIN-CONTAINING PROTEIN"/>
    <property type="match status" value="1"/>
</dbReference>
<dbReference type="Pfam" id="PF00550">
    <property type="entry name" value="PP-binding"/>
    <property type="match status" value="1"/>
</dbReference>
<dbReference type="SUPFAM" id="SSF47336">
    <property type="entry name" value="ACP-like"/>
    <property type="match status" value="1"/>
</dbReference>
<dbReference type="PROSITE" id="PS50075">
    <property type="entry name" value="CARRIER"/>
    <property type="match status" value="1"/>
</dbReference>
<dbReference type="PROSITE" id="PS00012">
    <property type="entry name" value="PHOSPHOPANTETHEINE"/>
    <property type="match status" value="1"/>
</dbReference>
<evidence type="ECO:0000255" key="1">
    <source>
        <dbReference type="HAMAP-Rule" id="MF_01217"/>
    </source>
</evidence>
<evidence type="ECO:0000255" key="2">
    <source>
        <dbReference type="PROSITE-ProRule" id="PRU00258"/>
    </source>
</evidence>
<sequence>MSTIEERVKKIIVEQLGVKEDEVKNSASFVEDLGADSLDTVELVMALEEEFDTEIPDEEAEKITTVQAAIDFINANQQ</sequence>
<name>ACP_YERP3</name>
<gene>
    <name evidence="1" type="primary">acpP</name>
    <name type="ordered locus">YpsIP31758_1579</name>
</gene>
<proteinExistence type="inferred from homology"/>
<reference key="1">
    <citation type="journal article" date="2007" name="PLoS Genet.">
        <title>The complete genome sequence of Yersinia pseudotuberculosis IP31758, the causative agent of Far East scarlet-like fever.</title>
        <authorList>
            <person name="Eppinger M."/>
            <person name="Rosovitz M.J."/>
            <person name="Fricke W.F."/>
            <person name="Rasko D.A."/>
            <person name="Kokorina G."/>
            <person name="Fayolle C."/>
            <person name="Lindler L.E."/>
            <person name="Carniel E."/>
            <person name="Ravel J."/>
        </authorList>
    </citation>
    <scope>NUCLEOTIDE SEQUENCE [LARGE SCALE GENOMIC DNA]</scope>
    <source>
        <strain>IP 31758</strain>
    </source>
</reference>
<feature type="chain" id="PRO_1000066720" description="Acyl carrier protein">
    <location>
        <begin position="1"/>
        <end position="78"/>
    </location>
</feature>
<feature type="domain" description="Carrier" evidence="2">
    <location>
        <begin position="2"/>
        <end position="77"/>
    </location>
</feature>
<feature type="modified residue" description="O-(pantetheine 4'-phosphoryl)serine" evidence="2">
    <location>
        <position position="37"/>
    </location>
</feature>
<keyword id="KW-0963">Cytoplasm</keyword>
<keyword id="KW-0275">Fatty acid biosynthesis</keyword>
<keyword id="KW-0276">Fatty acid metabolism</keyword>
<keyword id="KW-0444">Lipid biosynthesis</keyword>
<keyword id="KW-0443">Lipid metabolism</keyword>
<keyword id="KW-0596">Phosphopantetheine</keyword>
<keyword id="KW-0597">Phosphoprotein</keyword>
<organism>
    <name type="scientific">Yersinia pseudotuberculosis serotype O:1b (strain IP 31758)</name>
    <dbReference type="NCBI Taxonomy" id="349747"/>
    <lineage>
        <taxon>Bacteria</taxon>
        <taxon>Pseudomonadati</taxon>
        <taxon>Pseudomonadota</taxon>
        <taxon>Gammaproteobacteria</taxon>
        <taxon>Enterobacterales</taxon>
        <taxon>Yersiniaceae</taxon>
        <taxon>Yersinia</taxon>
    </lineage>
</organism>
<accession>A7FH28</accession>
<comment type="function">
    <text evidence="1">Carrier of the growing fatty acid chain in fatty acid biosynthesis.</text>
</comment>
<comment type="pathway">
    <text evidence="1">Lipid metabolism; fatty acid biosynthesis.</text>
</comment>
<comment type="subcellular location">
    <subcellularLocation>
        <location evidence="1">Cytoplasm</location>
    </subcellularLocation>
</comment>
<comment type="PTM">
    <text evidence="1">4'-phosphopantetheine is transferred from CoA to a specific serine of apo-ACP by AcpS. This modification is essential for activity because fatty acids are bound in thioester linkage to the sulfhydryl of the prosthetic group.</text>
</comment>
<comment type="similarity">
    <text evidence="1">Belongs to the acyl carrier protein (ACP) family.</text>
</comment>